<organism>
    <name type="scientific">Proteus mirabilis (strain HI4320)</name>
    <dbReference type="NCBI Taxonomy" id="529507"/>
    <lineage>
        <taxon>Bacteria</taxon>
        <taxon>Pseudomonadati</taxon>
        <taxon>Pseudomonadota</taxon>
        <taxon>Gammaproteobacteria</taxon>
        <taxon>Enterobacterales</taxon>
        <taxon>Morganellaceae</taxon>
        <taxon>Proteus</taxon>
    </lineage>
</organism>
<keyword id="KW-0012">Acyltransferase</keyword>
<keyword id="KW-0998">Cell outer membrane</keyword>
<keyword id="KW-0472">Membrane</keyword>
<keyword id="KW-1185">Reference proteome</keyword>
<keyword id="KW-0732">Signal</keyword>
<keyword id="KW-0808">Transferase</keyword>
<reference key="1">
    <citation type="journal article" date="2008" name="J. Bacteriol.">
        <title>Complete genome sequence of uropathogenic Proteus mirabilis, a master of both adherence and motility.</title>
        <authorList>
            <person name="Pearson M.M."/>
            <person name="Sebaihia M."/>
            <person name="Churcher C."/>
            <person name="Quail M.A."/>
            <person name="Seshasayee A.S."/>
            <person name="Luscombe N.M."/>
            <person name="Abdellah Z."/>
            <person name="Arrosmith C."/>
            <person name="Atkin B."/>
            <person name="Chillingworth T."/>
            <person name="Hauser H."/>
            <person name="Jagels K."/>
            <person name="Moule S."/>
            <person name="Mungall K."/>
            <person name="Norbertczak H."/>
            <person name="Rabbinowitsch E."/>
            <person name="Walker D."/>
            <person name="Whithead S."/>
            <person name="Thomson N.R."/>
            <person name="Rather P.N."/>
            <person name="Parkhill J."/>
            <person name="Mobley H.L.T."/>
        </authorList>
    </citation>
    <scope>NUCLEOTIDE SEQUENCE [LARGE SCALE GENOMIC DNA]</scope>
    <source>
        <strain>HI4320</strain>
    </source>
</reference>
<accession>B4EYA9</accession>
<dbReference type="EC" id="2.3.1.251" evidence="1"/>
<dbReference type="EMBL" id="AM942759">
    <property type="protein sequence ID" value="CAR43332.1"/>
    <property type="status" value="ALT_INIT"/>
    <property type="molecule type" value="Genomic_DNA"/>
</dbReference>
<dbReference type="RefSeq" id="WP_232504912.1">
    <property type="nucleotide sequence ID" value="NC_010554.1"/>
</dbReference>
<dbReference type="SMR" id="B4EYA9"/>
<dbReference type="DNASU" id="6803124"/>
<dbReference type="EnsemblBacteria" id="CAR43332">
    <property type="protein sequence ID" value="CAR43332"/>
    <property type="gene ID" value="PMI1595"/>
</dbReference>
<dbReference type="GeneID" id="6803124"/>
<dbReference type="KEGG" id="pmr:PMI1595"/>
<dbReference type="eggNOG" id="ENOG502Z7SY">
    <property type="taxonomic scope" value="Bacteria"/>
</dbReference>
<dbReference type="HOGENOM" id="CLU_104099_0_0_6"/>
<dbReference type="Proteomes" id="UP000008319">
    <property type="component" value="Chromosome"/>
</dbReference>
<dbReference type="GO" id="GO:0009279">
    <property type="term" value="C:cell outer membrane"/>
    <property type="evidence" value="ECO:0007669"/>
    <property type="project" value="UniProtKB-SubCell"/>
</dbReference>
<dbReference type="GO" id="GO:0016746">
    <property type="term" value="F:acyltransferase activity"/>
    <property type="evidence" value="ECO:0007669"/>
    <property type="project" value="UniProtKB-UniRule"/>
</dbReference>
<dbReference type="GO" id="GO:0009245">
    <property type="term" value="P:lipid A biosynthetic process"/>
    <property type="evidence" value="ECO:0007669"/>
    <property type="project" value="UniProtKB-UniRule"/>
</dbReference>
<dbReference type="FunFam" id="2.40.160.20:FF:000002">
    <property type="entry name" value="Lipid A palmitoyltransferase PagP"/>
    <property type="match status" value="1"/>
</dbReference>
<dbReference type="Gene3D" id="2.40.160.20">
    <property type="match status" value="1"/>
</dbReference>
<dbReference type="HAMAP" id="MF_00837">
    <property type="entry name" value="PagP_transferase"/>
    <property type="match status" value="1"/>
</dbReference>
<dbReference type="InterPro" id="IPR009746">
    <property type="entry name" value="LipidA_acyl_PagP"/>
</dbReference>
<dbReference type="InterPro" id="IPR011250">
    <property type="entry name" value="OMP/PagP_b-brl"/>
</dbReference>
<dbReference type="NCBIfam" id="NF008271">
    <property type="entry name" value="PRK11045.1"/>
    <property type="match status" value="1"/>
</dbReference>
<dbReference type="Pfam" id="PF07017">
    <property type="entry name" value="PagP"/>
    <property type="match status" value="1"/>
</dbReference>
<dbReference type="SUPFAM" id="SSF56925">
    <property type="entry name" value="OMPA-like"/>
    <property type="match status" value="1"/>
</dbReference>
<protein>
    <recommendedName>
        <fullName evidence="1">Lipid A acyltransferase PagP</fullName>
        <ecNumber evidence="1">2.3.1.251</ecNumber>
    </recommendedName>
    <alternativeName>
        <fullName evidence="1">Lipid A acylation protein</fullName>
    </alternativeName>
</protein>
<evidence type="ECO:0000255" key="1">
    <source>
        <dbReference type="HAMAP-Rule" id="MF_00837"/>
    </source>
</evidence>
<evidence type="ECO:0000256" key="2">
    <source>
        <dbReference type="SAM" id="MobiDB-lite"/>
    </source>
</evidence>
<evidence type="ECO:0000305" key="3"/>
<sequence>MSSTYFHSSLLAATLFSVTLTAPAFASENTQNTPQTITTKKPQPAENTFSEKNEESYWGKFKRNLTQTWDNDQYNYYLPVWTWHNRFTYDKEKTNRYNETPWGFGMGKYRYDNEGDWHGLYAMAFMDSNNRVQPIMGYGFEKMWYPGGDREGFRMGAGFTLSVTARHEYNYIPMPLPLPLVSVGYEHLSLQATYVPGTYNNGNVLFAWLRWQ</sequence>
<comment type="function">
    <text evidence="1">Transfers a fatty acid residue from the sn-1 position of a phospholipid to the N-linked hydroxyfatty acid chain on the proximal unit of lipid A or its precursors.</text>
</comment>
<comment type="catalytic activity">
    <reaction evidence="1">
        <text>a lipid A + a 1,2-diacyl-sn-glycero-3-phosphocholine = a hepta-acyl lipid A + a 2-acyl-sn-glycero-3-phosphocholine</text>
        <dbReference type="Rhea" id="RHEA:74275"/>
        <dbReference type="ChEBI" id="CHEBI:57643"/>
        <dbReference type="ChEBI" id="CHEBI:57875"/>
        <dbReference type="ChEBI" id="CHEBI:193141"/>
        <dbReference type="ChEBI" id="CHEBI:193142"/>
        <dbReference type="EC" id="2.3.1.251"/>
    </reaction>
</comment>
<comment type="catalytic activity">
    <reaction evidence="1">
        <text>a lipid IVA + a 1,2-diacyl-sn-glycero-3-phosphocholine = a lipid IVB + a 2-acyl-sn-glycero-3-phosphocholine</text>
        <dbReference type="Rhea" id="RHEA:74279"/>
        <dbReference type="ChEBI" id="CHEBI:57643"/>
        <dbReference type="ChEBI" id="CHEBI:57875"/>
        <dbReference type="ChEBI" id="CHEBI:176425"/>
        <dbReference type="ChEBI" id="CHEBI:193143"/>
        <dbReference type="EC" id="2.3.1.251"/>
    </reaction>
</comment>
<comment type="catalytic activity">
    <reaction evidence="1">
        <text>a lipid IIA + a 1,2-diacyl-sn-glycero-3-phosphocholine = a lipid IIB + a 2-acyl-sn-glycero-3-phosphocholine</text>
        <dbReference type="Rhea" id="RHEA:74283"/>
        <dbReference type="ChEBI" id="CHEBI:57643"/>
        <dbReference type="ChEBI" id="CHEBI:57875"/>
        <dbReference type="ChEBI" id="CHEBI:193144"/>
        <dbReference type="ChEBI" id="CHEBI:193145"/>
        <dbReference type="EC" id="2.3.1.251"/>
    </reaction>
</comment>
<comment type="subunit">
    <text evidence="1">Homodimer.</text>
</comment>
<comment type="subcellular location">
    <subcellularLocation>
        <location evidence="1">Cell outer membrane</location>
    </subcellularLocation>
</comment>
<comment type="similarity">
    <text evidence="1 3">Belongs to the lipid A palmitoyltransferase family.</text>
</comment>
<comment type="sequence caution" evidence="3">
    <conflict type="erroneous initiation">
        <sequence resource="EMBL-CDS" id="CAR43332"/>
    </conflict>
    <text>Extended N-terminus.</text>
</comment>
<proteinExistence type="inferred from homology"/>
<name>PAGP_PROMH</name>
<gene>
    <name evidence="1" type="primary">pagP</name>
    <name type="ordered locus">PMI1595</name>
</gene>
<feature type="signal peptide" evidence="1">
    <location>
        <begin position="1"/>
        <end position="26"/>
    </location>
</feature>
<feature type="chain" id="PRO_0000414469" description="Lipid A acyltransferase PagP">
    <location>
        <begin position="27"/>
        <end position="212"/>
    </location>
</feature>
<feature type="region of interest" description="Disordered" evidence="2">
    <location>
        <begin position="29"/>
        <end position="50"/>
    </location>
</feature>
<feature type="compositionally biased region" description="Low complexity" evidence="2">
    <location>
        <begin position="29"/>
        <end position="44"/>
    </location>
</feature>
<feature type="active site" evidence="1">
    <location>
        <position position="84"/>
    </location>
</feature>
<feature type="active site" evidence="1">
    <location>
        <position position="127"/>
    </location>
</feature>
<feature type="active site" evidence="1">
    <location>
        <position position="128"/>
    </location>
</feature>
<feature type="site" description="Role in lipopolysaccharide recognition" evidence="1">
    <location>
        <position position="93"/>
    </location>
</feature>
<feature type="site" description="Role in the phospholipid gating" evidence="1">
    <location>
        <position position="199"/>
    </location>
</feature>